<feature type="chain" id="PRO_0000194340" description="Putative agmatine deiminase">
    <location>
        <begin position="1"/>
        <end position="371"/>
    </location>
</feature>
<feature type="active site" description="Amidino-cysteine intermediate" evidence="1">
    <location>
        <position position="361"/>
    </location>
</feature>
<gene>
    <name evidence="1" type="primary">aguA</name>
</gene>
<reference key="1">
    <citation type="submission" date="2005-01" db="EMBL/GenBank/DDBJ databases">
        <title>Gene cloning and molecular characterization of arginine decarboxylase from Selenomonas ruminantium.</title>
        <authorList>
            <person name="Liao S."/>
            <person name="Takatsuka Y."/>
            <person name="Yamakuchi Y."/>
            <person name="Abe N."/>
            <person name="Kamio Y."/>
        </authorList>
    </citation>
    <scope>NUCLEOTIDE SEQUENCE [GENOMIC DNA]</scope>
</reference>
<proteinExistence type="inferred from homology"/>
<accession>Q5KR05</accession>
<sequence length="371" mass="41392">MMIKDSTPKADGFYMPAEFSPHAGTFLIWPVRPGSWTNAGADVQPVFVELIREISAVEELYLLVDEAHRPQAENMLKDLPQQHIHYLAIPTDDAWARDMGPTYVIDGQGRRRGINWRFNAWGGDFDGLYPDYGQDDAAAEKMCAALGDELYDAGDFVLEGGSIHVDGEGTVVVTEACLLSQGRNPDLSKEQIEAMLLKYLGAEKVIWLPRGIHNDETNEHVDNVFAFVRPGEVLLAWTDDKDDPQYELSQADLEVLESATDARGRKFVIHKLPIPQEPVCITAEEADSFTFEEGEDRREPGERLAASYVNFYLCNGKVILPQFGDEMDIEAQRILGKCFPERKVVPLPAKAVIVGGGNFHCLTQQIPAIER</sequence>
<organism>
    <name type="scientific">Selenomonas ruminantium</name>
    <dbReference type="NCBI Taxonomy" id="971"/>
    <lineage>
        <taxon>Bacteria</taxon>
        <taxon>Bacillati</taxon>
        <taxon>Bacillota</taxon>
        <taxon>Negativicutes</taxon>
        <taxon>Selenomonadales</taxon>
        <taxon>Selenomonadaceae</taxon>
        <taxon>Selenomonas</taxon>
    </lineage>
</organism>
<keyword id="KW-0378">Hydrolase</keyword>
<name>AGUA_SELRU</name>
<comment type="catalytic activity">
    <reaction evidence="1">
        <text>agmatine + H2O = N-carbamoylputrescine + NH4(+)</text>
        <dbReference type="Rhea" id="RHEA:18037"/>
        <dbReference type="ChEBI" id="CHEBI:15377"/>
        <dbReference type="ChEBI" id="CHEBI:28938"/>
        <dbReference type="ChEBI" id="CHEBI:58145"/>
        <dbReference type="ChEBI" id="CHEBI:58318"/>
        <dbReference type="EC" id="3.5.3.12"/>
    </reaction>
</comment>
<comment type="similarity">
    <text evidence="1">Belongs to the agmatine deiminase family.</text>
</comment>
<protein>
    <recommendedName>
        <fullName evidence="1">Putative agmatine deiminase</fullName>
        <ecNumber evidence="1">3.5.3.12</ecNumber>
    </recommendedName>
    <alternativeName>
        <fullName evidence="1">Agmatine iminohydrolase</fullName>
    </alternativeName>
</protein>
<dbReference type="EC" id="3.5.3.12" evidence="1"/>
<dbReference type="EMBL" id="AB198395">
    <property type="protein sequence ID" value="BAD86640.1"/>
    <property type="molecule type" value="Genomic_DNA"/>
</dbReference>
<dbReference type="SMR" id="Q5KR05"/>
<dbReference type="STRING" id="971.SAMN02910356_00269"/>
<dbReference type="OMA" id="IGVDCNT"/>
<dbReference type="BRENDA" id="3.5.3.12">
    <property type="organism ID" value="5668"/>
</dbReference>
<dbReference type="GO" id="GO:0047632">
    <property type="term" value="F:agmatine deiminase activity"/>
    <property type="evidence" value="ECO:0007669"/>
    <property type="project" value="UniProtKB-UniRule"/>
</dbReference>
<dbReference type="GO" id="GO:0004668">
    <property type="term" value="F:protein-arginine deiminase activity"/>
    <property type="evidence" value="ECO:0007669"/>
    <property type="project" value="InterPro"/>
</dbReference>
<dbReference type="GO" id="GO:0009446">
    <property type="term" value="P:putrescine biosynthetic process"/>
    <property type="evidence" value="ECO:0007669"/>
    <property type="project" value="InterPro"/>
</dbReference>
<dbReference type="Gene3D" id="3.75.10.10">
    <property type="entry name" value="L-arginine/glycine Amidinotransferase, Chain A"/>
    <property type="match status" value="1"/>
</dbReference>
<dbReference type="HAMAP" id="MF_01841">
    <property type="entry name" value="Agmatine_deimin"/>
    <property type="match status" value="1"/>
</dbReference>
<dbReference type="InterPro" id="IPR017754">
    <property type="entry name" value="Agmatine_deiminase"/>
</dbReference>
<dbReference type="InterPro" id="IPR007466">
    <property type="entry name" value="Peptidyl-Arg-deiminase_porph"/>
</dbReference>
<dbReference type="NCBIfam" id="TIGR03380">
    <property type="entry name" value="agmatine_aguA"/>
    <property type="match status" value="1"/>
</dbReference>
<dbReference type="NCBIfam" id="NF010070">
    <property type="entry name" value="PRK13551.1"/>
    <property type="match status" value="1"/>
</dbReference>
<dbReference type="PANTHER" id="PTHR31377">
    <property type="entry name" value="AGMATINE DEIMINASE-RELATED"/>
    <property type="match status" value="1"/>
</dbReference>
<dbReference type="PANTHER" id="PTHR31377:SF0">
    <property type="entry name" value="AGMATINE DEIMINASE-RELATED"/>
    <property type="match status" value="1"/>
</dbReference>
<dbReference type="Pfam" id="PF04371">
    <property type="entry name" value="PAD_porph"/>
    <property type="match status" value="1"/>
</dbReference>
<dbReference type="SUPFAM" id="SSF55909">
    <property type="entry name" value="Pentein"/>
    <property type="match status" value="1"/>
</dbReference>
<evidence type="ECO:0000255" key="1">
    <source>
        <dbReference type="HAMAP-Rule" id="MF_01841"/>
    </source>
</evidence>